<comment type="function">
    <text evidence="1">Binds directly to 16S ribosomal RNA.</text>
</comment>
<comment type="similarity">
    <text evidence="1">Belongs to the bacterial ribosomal protein bS20 family.</text>
</comment>
<organism>
    <name type="scientific">Staphylococcus aureus (strain MSSA476)</name>
    <dbReference type="NCBI Taxonomy" id="282459"/>
    <lineage>
        <taxon>Bacteria</taxon>
        <taxon>Bacillati</taxon>
        <taxon>Bacillota</taxon>
        <taxon>Bacilli</taxon>
        <taxon>Bacillales</taxon>
        <taxon>Staphylococcaceae</taxon>
        <taxon>Staphylococcus</taxon>
    </lineage>
</organism>
<gene>
    <name evidence="1" type="primary">rpsT</name>
    <name type="ordered locus">SAS1523</name>
</gene>
<name>RS20_STAAS</name>
<keyword id="KW-0687">Ribonucleoprotein</keyword>
<keyword id="KW-0689">Ribosomal protein</keyword>
<keyword id="KW-0694">RNA-binding</keyword>
<keyword id="KW-0699">rRNA-binding</keyword>
<evidence type="ECO:0000255" key="1">
    <source>
        <dbReference type="HAMAP-Rule" id="MF_00500"/>
    </source>
</evidence>
<evidence type="ECO:0000305" key="2"/>
<proteinExistence type="inferred from homology"/>
<dbReference type="EMBL" id="BX571857">
    <property type="protein sequence ID" value="CAG43324.1"/>
    <property type="molecule type" value="Genomic_DNA"/>
</dbReference>
<dbReference type="RefSeq" id="WP_001274017.1">
    <property type="nucleotide sequence ID" value="NC_002953.3"/>
</dbReference>
<dbReference type="SMR" id="Q6G8Y2"/>
<dbReference type="GeneID" id="66839775"/>
<dbReference type="KEGG" id="sas:SAS1523"/>
<dbReference type="HOGENOM" id="CLU_160655_1_1_9"/>
<dbReference type="GO" id="GO:0005829">
    <property type="term" value="C:cytosol"/>
    <property type="evidence" value="ECO:0007669"/>
    <property type="project" value="TreeGrafter"/>
</dbReference>
<dbReference type="GO" id="GO:0015935">
    <property type="term" value="C:small ribosomal subunit"/>
    <property type="evidence" value="ECO:0007669"/>
    <property type="project" value="TreeGrafter"/>
</dbReference>
<dbReference type="GO" id="GO:0070181">
    <property type="term" value="F:small ribosomal subunit rRNA binding"/>
    <property type="evidence" value="ECO:0007669"/>
    <property type="project" value="TreeGrafter"/>
</dbReference>
<dbReference type="GO" id="GO:0003735">
    <property type="term" value="F:structural constituent of ribosome"/>
    <property type="evidence" value="ECO:0007669"/>
    <property type="project" value="InterPro"/>
</dbReference>
<dbReference type="GO" id="GO:0006412">
    <property type="term" value="P:translation"/>
    <property type="evidence" value="ECO:0007669"/>
    <property type="project" value="UniProtKB-UniRule"/>
</dbReference>
<dbReference type="Gene3D" id="1.20.58.110">
    <property type="entry name" value="Ribosomal protein S20"/>
    <property type="match status" value="1"/>
</dbReference>
<dbReference type="HAMAP" id="MF_00500">
    <property type="entry name" value="Ribosomal_bS20"/>
    <property type="match status" value="1"/>
</dbReference>
<dbReference type="InterPro" id="IPR002583">
    <property type="entry name" value="Ribosomal_bS20"/>
</dbReference>
<dbReference type="InterPro" id="IPR036510">
    <property type="entry name" value="Ribosomal_bS20_sf"/>
</dbReference>
<dbReference type="NCBIfam" id="TIGR00029">
    <property type="entry name" value="S20"/>
    <property type="match status" value="1"/>
</dbReference>
<dbReference type="PANTHER" id="PTHR33398">
    <property type="entry name" value="30S RIBOSOMAL PROTEIN S20"/>
    <property type="match status" value="1"/>
</dbReference>
<dbReference type="PANTHER" id="PTHR33398:SF1">
    <property type="entry name" value="SMALL RIBOSOMAL SUBUNIT PROTEIN BS20C"/>
    <property type="match status" value="1"/>
</dbReference>
<dbReference type="Pfam" id="PF01649">
    <property type="entry name" value="Ribosomal_S20p"/>
    <property type="match status" value="1"/>
</dbReference>
<dbReference type="SUPFAM" id="SSF46992">
    <property type="entry name" value="Ribosomal protein S20"/>
    <property type="match status" value="1"/>
</dbReference>
<sequence length="83" mass="9021">MANIKSAIKRVKTTEKAEARNISQKSAMRTAVKNAKTAVSNNADNKNELVSLAVKLVDKAAQSNLIHSNKADRIKSQLMTANK</sequence>
<reference key="1">
    <citation type="journal article" date="2004" name="Proc. Natl. Acad. Sci. U.S.A.">
        <title>Complete genomes of two clinical Staphylococcus aureus strains: evidence for the rapid evolution of virulence and drug resistance.</title>
        <authorList>
            <person name="Holden M.T.G."/>
            <person name="Feil E.J."/>
            <person name="Lindsay J.A."/>
            <person name="Peacock S.J."/>
            <person name="Day N.P.J."/>
            <person name="Enright M.C."/>
            <person name="Foster T.J."/>
            <person name="Moore C.E."/>
            <person name="Hurst L."/>
            <person name="Atkin R."/>
            <person name="Barron A."/>
            <person name="Bason N."/>
            <person name="Bentley S.D."/>
            <person name="Chillingworth C."/>
            <person name="Chillingworth T."/>
            <person name="Churcher C."/>
            <person name="Clark L."/>
            <person name="Corton C."/>
            <person name="Cronin A."/>
            <person name="Doggett J."/>
            <person name="Dowd L."/>
            <person name="Feltwell T."/>
            <person name="Hance Z."/>
            <person name="Harris B."/>
            <person name="Hauser H."/>
            <person name="Holroyd S."/>
            <person name="Jagels K."/>
            <person name="James K.D."/>
            <person name="Lennard N."/>
            <person name="Line A."/>
            <person name="Mayes R."/>
            <person name="Moule S."/>
            <person name="Mungall K."/>
            <person name="Ormond D."/>
            <person name="Quail M.A."/>
            <person name="Rabbinowitsch E."/>
            <person name="Rutherford K.M."/>
            <person name="Sanders M."/>
            <person name="Sharp S."/>
            <person name="Simmonds M."/>
            <person name="Stevens K."/>
            <person name="Whitehead S."/>
            <person name="Barrell B.G."/>
            <person name="Spratt B.G."/>
            <person name="Parkhill J."/>
        </authorList>
    </citation>
    <scope>NUCLEOTIDE SEQUENCE [LARGE SCALE GENOMIC DNA]</scope>
    <source>
        <strain>MSSA476</strain>
    </source>
</reference>
<feature type="chain" id="PRO_0000224948" description="Small ribosomal subunit protein bS20">
    <location>
        <begin position="1"/>
        <end position="83"/>
    </location>
</feature>
<protein>
    <recommendedName>
        <fullName evidence="1">Small ribosomal subunit protein bS20</fullName>
    </recommendedName>
    <alternativeName>
        <fullName evidence="2">30S ribosomal protein S20</fullName>
    </alternativeName>
</protein>
<accession>Q6G8Y2</accession>